<dbReference type="EC" id="6.1.1.3" evidence="1"/>
<dbReference type="EMBL" id="BA000012">
    <property type="protein sequence ID" value="BAB48401.1"/>
    <property type="molecule type" value="Genomic_DNA"/>
</dbReference>
<dbReference type="RefSeq" id="WP_010909755.1">
    <property type="nucleotide sequence ID" value="NC_002678.2"/>
</dbReference>
<dbReference type="SMR" id="Q98LR2"/>
<dbReference type="KEGG" id="mlo:mll0914"/>
<dbReference type="PATRIC" id="fig|266835.9.peg.728"/>
<dbReference type="eggNOG" id="COG0441">
    <property type="taxonomic scope" value="Bacteria"/>
</dbReference>
<dbReference type="HOGENOM" id="CLU_008554_0_1_5"/>
<dbReference type="Proteomes" id="UP000000552">
    <property type="component" value="Chromosome"/>
</dbReference>
<dbReference type="GO" id="GO:0005829">
    <property type="term" value="C:cytosol"/>
    <property type="evidence" value="ECO:0007669"/>
    <property type="project" value="TreeGrafter"/>
</dbReference>
<dbReference type="GO" id="GO:0005524">
    <property type="term" value="F:ATP binding"/>
    <property type="evidence" value="ECO:0007669"/>
    <property type="project" value="UniProtKB-UniRule"/>
</dbReference>
<dbReference type="GO" id="GO:0046872">
    <property type="term" value="F:metal ion binding"/>
    <property type="evidence" value="ECO:0007669"/>
    <property type="project" value="UniProtKB-KW"/>
</dbReference>
<dbReference type="GO" id="GO:0004829">
    <property type="term" value="F:threonine-tRNA ligase activity"/>
    <property type="evidence" value="ECO:0007669"/>
    <property type="project" value="UniProtKB-UniRule"/>
</dbReference>
<dbReference type="GO" id="GO:0000049">
    <property type="term" value="F:tRNA binding"/>
    <property type="evidence" value="ECO:0007669"/>
    <property type="project" value="UniProtKB-KW"/>
</dbReference>
<dbReference type="GO" id="GO:0006435">
    <property type="term" value="P:threonyl-tRNA aminoacylation"/>
    <property type="evidence" value="ECO:0007669"/>
    <property type="project" value="UniProtKB-UniRule"/>
</dbReference>
<dbReference type="CDD" id="cd01667">
    <property type="entry name" value="TGS_ThrRS"/>
    <property type="match status" value="1"/>
</dbReference>
<dbReference type="CDD" id="cd00860">
    <property type="entry name" value="ThrRS_anticodon"/>
    <property type="match status" value="1"/>
</dbReference>
<dbReference type="CDD" id="cd00771">
    <property type="entry name" value="ThrRS_core"/>
    <property type="match status" value="1"/>
</dbReference>
<dbReference type="FunFam" id="3.30.54.20:FF:000002">
    <property type="entry name" value="Threonine--tRNA ligase"/>
    <property type="match status" value="1"/>
</dbReference>
<dbReference type="FunFam" id="3.30.930.10:FF:000002">
    <property type="entry name" value="Threonine--tRNA ligase"/>
    <property type="match status" value="1"/>
</dbReference>
<dbReference type="FunFam" id="3.40.50.800:FF:000001">
    <property type="entry name" value="Threonine--tRNA ligase"/>
    <property type="match status" value="1"/>
</dbReference>
<dbReference type="FunFam" id="3.30.980.10:FF:000005">
    <property type="entry name" value="Threonyl-tRNA synthetase, mitochondrial"/>
    <property type="match status" value="1"/>
</dbReference>
<dbReference type="Gene3D" id="3.10.20.30">
    <property type="match status" value="1"/>
</dbReference>
<dbReference type="Gene3D" id="3.30.54.20">
    <property type="match status" value="1"/>
</dbReference>
<dbReference type="Gene3D" id="3.40.50.800">
    <property type="entry name" value="Anticodon-binding domain"/>
    <property type="match status" value="1"/>
</dbReference>
<dbReference type="Gene3D" id="3.30.930.10">
    <property type="entry name" value="Bira Bifunctional Protein, Domain 2"/>
    <property type="match status" value="1"/>
</dbReference>
<dbReference type="Gene3D" id="3.30.980.10">
    <property type="entry name" value="Threonyl-trna Synthetase, Chain A, domain 2"/>
    <property type="match status" value="1"/>
</dbReference>
<dbReference type="HAMAP" id="MF_00184">
    <property type="entry name" value="Thr_tRNA_synth"/>
    <property type="match status" value="1"/>
</dbReference>
<dbReference type="InterPro" id="IPR002314">
    <property type="entry name" value="aa-tRNA-synt_IIb"/>
</dbReference>
<dbReference type="InterPro" id="IPR006195">
    <property type="entry name" value="aa-tRNA-synth_II"/>
</dbReference>
<dbReference type="InterPro" id="IPR045864">
    <property type="entry name" value="aa-tRNA-synth_II/BPL/LPL"/>
</dbReference>
<dbReference type="InterPro" id="IPR004154">
    <property type="entry name" value="Anticodon-bd"/>
</dbReference>
<dbReference type="InterPro" id="IPR036621">
    <property type="entry name" value="Anticodon-bd_dom_sf"/>
</dbReference>
<dbReference type="InterPro" id="IPR012675">
    <property type="entry name" value="Beta-grasp_dom_sf"/>
</dbReference>
<dbReference type="InterPro" id="IPR004095">
    <property type="entry name" value="TGS"/>
</dbReference>
<dbReference type="InterPro" id="IPR012676">
    <property type="entry name" value="TGS-like"/>
</dbReference>
<dbReference type="InterPro" id="IPR002320">
    <property type="entry name" value="Thr-tRNA-ligase_IIa"/>
</dbReference>
<dbReference type="InterPro" id="IPR018163">
    <property type="entry name" value="Thr/Ala-tRNA-synth_IIc_edit"/>
</dbReference>
<dbReference type="InterPro" id="IPR047246">
    <property type="entry name" value="ThrRS_anticodon"/>
</dbReference>
<dbReference type="InterPro" id="IPR033728">
    <property type="entry name" value="ThrRS_core"/>
</dbReference>
<dbReference type="InterPro" id="IPR012947">
    <property type="entry name" value="tRNA_SAD"/>
</dbReference>
<dbReference type="NCBIfam" id="TIGR00418">
    <property type="entry name" value="thrS"/>
    <property type="match status" value="1"/>
</dbReference>
<dbReference type="PANTHER" id="PTHR11451:SF44">
    <property type="entry name" value="THREONINE--TRNA LIGASE, CHLOROPLASTIC_MITOCHONDRIAL 2"/>
    <property type="match status" value="1"/>
</dbReference>
<dbReference type="PANTHER" id="PTHR11451">
    <property type="entry name" value="THREONINE-TRNA LIGASE"/>
    <property type="match status" value="1"/>
</dbReference>
<dbReference type="Pfam" id="PF03129">
    <property type="entry name" value="HGTP_anticodon"/>
    <property type="match status" value="1"/>
</dbReference>
<dbReference type="Pfam" id="PF02824">
    <property type="entry name" value="TGS"/>
    <property type="match status" value="1"/>
</dbReference>
<dbReference type="Pfam" id="PF00587">
    <property type="entry name" value="tRNA-synt_2b"/>
    <property type="match status" value="1"/>
</dbReference>
<dbReference type="Pfam" id="PF07973">
    <property type="entry name" value="tRNA_SAD"/>
    <property type="match status" value="1"/>
</dbReference>
<dbReference type="PRINTS" id="PR01047">
    <property type="entry name" value="TRNASYNTHTHR"/>
</dbReference>
<dbReference type="SMART" id="SM00863">
    <property type="entry name" value="tRNA_SAD"/>
    <property type="match status" value="1"/>
</dbReference>
<dbReference type="SUPFAM" id="SSF52954">
    <property type="entry name" value="Class II aaRS ABD-related"/>
    <property type="match status" value="1"/>
</dbReference>
<dbReference type="SUPFAM" id="SSF55681">
    <property type="entry name" value="Class II aaRS and biotin synthetases"/>
    <property type="match status" value="1"/>
</dbReference>
<dbReference type="SUPFAM" id="SSF81271">
    <property type="entry name" value="TGS-like"/>
    <property type="match status" value="1"/>
</dbReference>
<dbReference type="SUPFAM" id="SSF55186">
    <property type="entry name" value="ThrRS/AlaRS common domain"/>
    <property type="match status" value="1"/>
</dbReference>
<dbReference type="PROSITE" id="PS50862">
    <property type="entry name" value="AA_TRNA_LIGASE_II"/>
    <property type="match status" value="1"/>
</dbReference>
<dbReference type="PROSITE" id="PS51880">
    <property type="entry name" value="TGS"/>
    <property type="match status" value="1"/>
</dbReference>
<keyword id="KW-0030">Aminoacyl-tRNA synthetase</keyword>
<keyword id="KW-0067">ATP-binding</keyword>
<keyword id="KW-0963">Cytoplasm</keyword>
<keyword id="KW-0436">Ligase</keyword>
<keyword id="KW-0479">Metal-binding</keyword>
<keyword id="KW-0547">Nucleotide-binding</keyword>
<keyword id="KW-0648">Protein biosynthesis</keyword>
<keyword id="KW-0694">RNA-binding</keyword>
<keyword id="KW-0820">tRNA-binding</keyword>
<keyword id="KW-0862">Zinc</keyword>
<evidence type="ECO:0000255" key="1">
    <source>
        <dbReference type="HAMAP-Rule" id="MF_00184"/>
    </source>
</evidence>
<evidence type="ECO:0000255" key="2">
    <source>
        <dbReference type="PROSITE-ProRule" id="PRU01228"/>
    </source>
</evidence>
<organism>
    <name type="scientific">Mesorhizobium japonicum (strain LMG 29417 / CECT 9101 / MAFF 303099)</name>
    <name type="common">Mesorhizobium loti (strain MAFF 303099)</name>
    <dbReference type="NCBI Taxonomy" id="266835"/>
    <lineage>
        <taxon>Bacteria</taxon>
        <taxon>Pseudomonadati</taxon>
        <taxon>Pseudomonadota</taxon>
        <taxon>Alphaproteobacteria</taxon>
        <taxon>Hyphomicrobiales</taxon>
        <taxon>Phyllobacteriaceae</taxon>
        <taxon>Mesorhizobium</taxon>
    </lineage>
</organism>
<comment type="function">
    <text evidence="1">Catalyzes the attachment of threonine to tRNA(Thr) in a two-step reaction: L-threonine is first activated by ATP to form Thr-AMP and then transferred to the acceptor end of tRNA(Thr). Also edits incorrectly charged L-seryl-tRNA(Thr).</text>
</comment>
<comment type="catalytic activity">
    <reaction evidence="1">
        <text>tRNA(Thr) + L-threonine + ATP = L-threonyl-tRNA(Thr) + AMP + diphosphate + H(+)</text>
        <dbReference type="Rhea" id="RHEA:24624"/>
        <dbReference type="Rhea" id="RHEA-COMP:9670"/>
        <dbReference type="Rhea" id="RHEA-COMP:9704"/>
        <dbReference type="ChEBI" id="CHEBI:15378"/>
        <dbReference type="ChEBI" id="CHEBI:30616"/>
        <dbReference type="ChEBI" id="CHEBI:33019"/>
        <dbReference type="ChEBI" id="CHEBI:57926"/>
        <dbReference type="ChEBI" id="CHEBI:78442"/>
        <dbReference type="ChEBI" id="CHEBI:78534"/>
        <dbReference type="ChEBI" id="CHEBI:456215"/>
        <dbReference type="EC" id="6.1.1.3"/>
    </reaction>
</comment>
<comment type="cofactor">
    <cofactor evidence="1">
        <name>Zn(2+)</name>
        <dbReference type="ChEBI" id="CHEBI:29105"/>
    </cofactor>
    <text evidence="1">Binds 1 zinc ion per subunit.</text>
</comment>
<comment type="subunit">
    <text evidence="1">Homodimer.</text>
</comment>
<comment type="subcellular location">
    <subcellularLocation>
        <location evidence="1">Cytoplasm</location>
    </subcellularLocation>
</comment>
<comment type="similarity">
    <text evidence="1">Belongs to the class-II aminoacyl-tRNA synthetase family.</text>
</comment>
<feature type="chain" id="PRO_0000101032" description="Threonine--tRNA ligase">
    <location>
        <begin position="1"/>
        <end position="658"/>
    </location>
</feature>
<feature type="domain" description="TGS" evidence="2">
    <location>
        <begin position="1"/>
        <end position="64"/>
    </location>
</feature>
<feature type="region of interest" description="Catalytic" evidence="1">
    <location>
        <begin position="246"/>
        <end position="549"/>
    </location>
</feature>
<feature type="binding site" evidence="1">
    <location>
        <position position="343"/>
    </location>
    <ligand>
        <name>Zn(2+)</name>
        <dbReference type="ChEBI" id="CHEBI:29105"/>
    </ligand>
</feature>
<feature type="binding site" evidence="1">
    <location>
        <position position="394"/>
    </location>
    <ligand>
        <name>Zn(2+)</name>
        <dbReference type="ChEBI" id="CHEBI:29105"/>
    </ligand>
</feature>
<feature type="binding site" evidence="1">
    <location>
        <position position="526"/>
    </location>
    <ligand>
        <name>Zn(2+)</name>
        <dbReference type="ChEBI" id="CHEBI:29105"/>
    </ligand>
</feature>
<name>SYT_RHILO</name>
<proteinExistence type="inferred from homology"/>
<protein>
    <recommendedName>
        <fullName evidence="1">Threonine--tRNA ligase</fullName>
        <ecNumber evidence="1">6.1.1.3</ecNumber>
    </recommendedName>
    <alternativeName>
        <fullName evidence="1">Threonyl-tRNA synthetase</fullName>
        <shortName evidence="1">ThrRS</shortName>
    </alternativeName>
</protein>
<reference key="1">
    <citation type="journal article" date="2000" name="DNA Res.">
        <title>Complete genome structure of the nitrogen-fixing symbiotic bacterium Mesorhizobium loti.</title>
        <authorList>
            <person name="Kaneko T."/>
            <person name="Nakamura Y."/>
            <person name="Sato S."/>
            <person name="Asamizu E."/>
            <person name="Kato T."/>
            <person name="Sasamoto S."/>
            <person name="Watanabe A."/>
            <person name="Idesawa K."/>
            <person name="Ishikawa A."/>
            <person name="Kawashima K."/>
            <person name="Kimura T."/>
            <person name="Kishida Y."/>
            <person name="Kiyokawa C."/>
            <person name="Kohara M."/>
            <person name="Matsumoto M."/>
            <person name="Matsuno A."/>
            <person name="Mochizuki Y."/>
            <person name="Nakayama S."/>
            <person name="Nakazaki N."/>
            <person name="Shimpo S."/>
            <person name="Sugimoto M."/>
            <person name="Takeuchi C."/>
            <person name="Yamada M."/>
            <person name="Tabata S."/>
        </authorList>
    </citation>
    <scope>NUCLEOTIDE SEQUENCE [LARGE SCALE GENOMIC DNA]</scope>
    <source>
        <strain>LMG 29417 / CECT 9101 / MAFF 303099</strain>
    </source>
</reference>
<sequence>MLNSVSLTFPDGSVRDYDAAMTGAGLAESISKSLAKKAVAYAINGTVRDLSDPLGKSGKVEIITRDDARALELIRHDTAHVLAEAVQELWPGTQVTIGPVIENGFYYDFARNEPFTPDDFPVIEKKMREIIARNKPFTKEVWSRDKAKKVFADKGERYKLELIDAIPEDQDLKIYAQGDWFDLCRGPHMASTGQIGNAFKLMKVAGAYWRGDSNNPMLTRIYGTAWADQAQLEAYQTMLEEAEKRDHRKLGREMDLFHFQEEGPGVVFWHAKGWKMFQNLVNYMRRRLDEQGYQEVNAPQVLDKSLWETSGHWGWYRDAMFKVTVAGDDTDDDRVFALKPMNCPGHVQIFKHGLKSYRDLPVKLAEFGNVHRYEPSGALHGLMRVRGFTQDDAHIFCTEEQLASECLRINDLILSTYADFGFDEISVKLSTRPDKRVGTDEAWDHAEAIMGSVLETIRTRSGNRIKTSINPGEGAFYGPKFEYVLKDAIGREWQCGTTQVDFNLPERFGAFYIGSDSEKKQPVMVHRAICGSMERFLGILIENYSGHFPLWFAPQQVVVATITSEADGYATEVVAKLKAAGLLAEADLRNEKINYKVREHSLAKVPVILVCGKREAEEQTVNIRRLGSRDQESLGLAEAIAQLTEEAVTPDRRRKRAA</sequence>
<gene>
    <name evidence="1" type="primary">thrS</name>
    <name type="ordered locus">mll0914</name>
</gene>
<accession>Q98LR2</accession>